<dbReference type="EMBL" id="CP000668">
    <property type="protein sequence ID" value="ABP42094.1"/>
    <property type="molecule type" value="Genomic_DNA"/>
</dbReference>
<dbReference type="RefSeq" id="WP_002210673.1">
    <property type="nucleotide sequence ID" value="NZ_CP009715.1"/>
</dbReference>
<dbReference type="SMR" id="A4TS32"/>
<dbReference type="GeneID" id="57974968"/>
<dbReference type="KEGG" id="ypp:YPDSF_3748"/>
<dbReference type="PATRIC" id="fig|386656.14.peg.775"/>
<dbReference type="GO" id="GO:0022625">
    <property type="term" value="C:cytosolic large ribosomal subunit"/>
    <property type="evidence" value="ECO:0007669"/>
    <property type="project" value="TreeGrafter"/>
</dbReference>
<dbReference type="GO" id="GO:0019843">
    <property type="term" value="F:rRNA binding"/>
    <property type="evidence" value="ECO:0007669"/>
    <property type="project" value="UniProtKB-UniRule"/>
</dbReference>
<dbReference type="GO" id="GO:0003735">
    <property type="term" value="F:structural constituent of ribosome"/>
    <property type="evidence" value="ECO:0007669"/>
    <property type="project" value="InterPro"/>
</dbReference>
<dbReference type="GO" id="GO:0000049">
    <property type="term" value="F:tRNA binding"/>
    <property type="evidence" value="ECO:0007669"/>
    <property type="project" value="UniProtKB-KW"/>
</dbReference>
<dbReference type="GO" id="GO:0006417">
    <property type="term" value="P:regulation of translation"/>
    <property type="evidence" value="ECO:0007669"/>
    <property type="project" value="UniProtKB-KW"/>
</dbReference>
<dbReference type="GO" id="GO:0006412">
    <property type="term" value="P:translation"/>
    <property type="evidence" value="ECO:0007669"/>
    <property type="project" value="UniProtKB-UniRule"/>
</dbReference>
<dbReference type="CDD" id="cd00403">
    <property type="entry name" value="Ribosomal_L1"/>
    <property type="match status" value="1"/>
</dbReference>
<dbReference type="FunFam" id="3.40.50.790:FF:000001">
    <property type="entry name" value="50S ribosomal protein L1"/>
    <property type="match status" value="1"/>
</dbReference>
<dbReference type="Gene3D" id="3.30.190.20">
    <property type="match status" value="1"/>
</dbReference>
<dbReference type="Gene3D" id="3.40.50.790">
    <property type="match status" value="1"/>
</dbReference>
<dbReference type="HAMAP" id="MF_01318_B">
    <property type="entry name" value="Ribosomal_uL1_B"/>
    <property type="match status" value="1"/>
</dbReference>
<dbReference type="InterPro" id="IPR005878">
    <property type="entry name" value="Ribosom_uL1_bac-type"/>
</dbReference>
<dbReference type="InterPro" id="IPR002143">
    <property type="entry name" value="Ribosomal_uL1"/>
</dbReference>
<dbReference type="InterPro" id="IPR023674">
    <property type="entry name" value="Ribosomal_uL1-like"/>
</dbReference>
<dbReference type="InterPro" id="IPR028364">
    <property type="entry name" value="Ribosomal_uL1/biogenesis"/>
</dbReference>
<dbReference type="InterPro" id="IPR016095">
    <property type="entry name" value="Ribosomal_uL1_3-a/b-sand"/>
</dbReference>
<dbReference type="InterPro" id="IPR023673">
    <property type="entry name" value="Ribosomal_uL1_CS"/>
</dbReference>
<dbReference type="NCBIfam" id="TIGR01169">
    <property type="entry name" value="rplA_bact"/>
    <property type="match status" value="1"/>
</dbReference>
<dbReference type="PANTHER" id="PTHR36427">
    <property type="entry name" value="54S RIBOSOMAL PROTEIN L1, MITOCHONDRIAL"/>
    <property type="match status" value="1"/>
</dbReference>
<dbReference type="PANTHER" id="PTHR36427:SF3">
    <property type="entry name" value="LARGE RIBOSOMAL SUBUNIT PROTEIN UL1M"/>
    <property type="match status" value="1"/>
</dbReference>
<dbReference type="Pfam" id="PF00687">
    <property type="entry name" value="Ribosomal_L1"/>
    <property type="match status" value="1"/>
</dbReference>
<dbReference type="PIRSF" id="PIRSF002155">
    <property type="entry name" value="Ribosomal_L1"/>
    <property type="match status" value="1"/>
</dbReference>
<dbReference type="SUPFAM" id="SSF56808">
    <property type="entry name" value="Ribosomal protein L1"/>
    <property type="match status" value="1"/>
</dbReference>
<dbReference type="PROSITE" id="PS01199">
    <property type="entry name" value="RIBOSOMAL_L1"/>
    <property type="match status" value="1"/>
</dbReference>
<comment type="function">
    <text evidence="1">Binds directly to 23S rRNA. The L1 stalk is quite mobile in the ribosome, and is involved in E site tRNA release.</text>
</comment>
<comment type="function">
    <text evidence="1">Protein L1 is also a translational repressor protein, it controls the translation of the L11 operon by binding to its mRNA.</text>
</comment>
<comment type="subunit">
    <text evidence="1">Part of the 50S ribosomal subunit.</text>
</comment>
<comment type="similarity">
    <text evidence="1">Belongs to the universal ribosomal protein uL1 family.</text>
</comment>
<reference key="1">
    <citation type="submission" date="2007-02" db="EMBL/GenBank/DDBJ databases">
        <title>Complete sequence of chromosome of Yersinia pestis Pestoides F.</title>
        <authorList>
            <consortium name="US DOE Joint Genome Institute"/>
            <person name="Copeland A."/>
            <person name="Lucas S."/>
            <person name="Lapidus A."/>
            <person name="Barry K."/>
            <person name="Detter J.C."/>
            <person name="Glavina del Rio T."/>
            <person name="Hammon N."/>
            <person name="Israni S."/>
            <person name="Dalin E."/>
            <person name="Tice H."/>
            <person name="Pitluck S."/>
            <person name="Di Bartolo G."/>
            <person name="Chain P."/>
            <person name="Malfatti S."/>
            <person name="Shin M."/>
            <person name="Vergez L."/>
            <person name="Schmutz J."/>
            <person name="Larimer F."/>
            <person name="Land M."/>
            <person name="Hauser L."/>
            <person name="Worsham P."/>
            <person name="Chu M."/>
            <person name="Bearden S."/>
            <person name="Garcia E."/>
            <person name="Richardson P."/>
        </authorList>
    </citation>
    <scope>NUCLEOTIDE SEQUENCE [LARGE SCALE GENOMIC DNA]</scope>
    <source>
        <strain>Pestoides F</strain>
    </source>
</reference>
<proteinExistence type="inferred from homology"/>
<accession>A4TS32</accession>
<feature type="chain" id="PRO_0000308142" description="Large ribosomal subunit protein uL1">
    <location>
        <begin position="1"/>
        <end position="234"/>
    </location>
</feature>
<sequence length="234" mass="24803">MAKLTKRMRVIRDKVDVTKQYDINEAVALLKELATAKFVESVDVAVNLGIDARKSDQNVRGATVLPHGTGRSVRVAVFAQGANAEAAKEAGAELVGMDDLADQIKKGEMNFDVVIASPDAMRVVGQLGQILGPRGLMPNPKVGTVTPNVAEAVKNAKAGQVRYRNDKNGIIHTTIGKVDFDSDKLKENLESLVVALKKAKPATAKGIYIKKISLSTTMGAGVAIDQSGLTAVVN</sequence>
<keyword id="KW-0678">Repressor</keyword>
<keyword id="KW-0687">Ribonucleoprotein</keyword>
<keyword id="KW-0689">Ribosomal protein</keyword>
<keyword id="KW-0694">RNA-binding</keyword>
<keyword id="KW-0699">rRNA-binding</keyword>
<keyword id="KW-0810">Translation regulation</keyword>
<keyword id="KW-0820">tRNA-binding</keyword>
<organism>
    <name type="scientific">Yersinia pestis (strain Pestoides F)</name>
    <dbReference type="NCBI Taxonomy" id="386656"/>
    <lineage>
        <taxon>Bacteria</taxon>
        <taxon>Pseudomonadati</taxon>
        <taxon>Pseudomonadota</taxon>
        <taxon>Gammaproteobacteria</taxon>
        <taxon>Enterobacterales</taxon>
        <taxon>Yersiniaceae</taxon>
        <taxon>Yersinia</taxon>
    </lineage>
</organism>
<name>RL1_YERPP</name>
<evidence type="ECO:0000255" key="1">
    <source>
        <dbReference type="HAMAP-Rule" id="MF_01318"/>
    </source>
</evidence>
<evidence type="ECO:0000305" key="2"/>
<protein>
    <recommendedName>
        <fullName evidence="1">Large ribosomal subunit protein uL1</fullName>
    </recommendedName>
    <alternativeName>
        <fullName evidence="2">50S ribosomal protein L1</fullName>
    </alternativeName>
</protein>
<gene>
    <name evidence="1" type="primary">rplA</name>
    <name type="ordered locus">YPDSF_3748</name>
</gene>